<sequence>MAQREEAGPSSVDPEDVARFDRIGEDWWSADGPMAALHKLNPVRVAYLRDLMSRHFRVEGLPRDRYAPRPLEGLRILDAGCGAGLLAEPLARLGARVTAIDPAPRNIEVARRHAEKSGLSIDYRMTTIEALSGEAATFDAVLAMEVLEHVLDVAGFVRCCGALVRPGGLMFAATLNRTLKSFAFAIVGAEYVLGWAPRGTHDWRRFISPRELARAMAAADLSAFDETGVVFDPLQGGWRLAHDTDINYMMAASKRR</sequence>
<keyword id="KW-0489">Methyltransferase</keyword>
<keyword id="KW-1185">Reference proteome</keyword>
<keyword id="KW-0949">S-adenosyl-L-methionine</keyword>
<keyword id="KW-0808">Transferase</keyword>
<keyword id="KW-0831">Ubiquinone biosynthesis</keyword>
<organism>
    <name type="scientific">Methylocella silvestris (strain DSM 15510 / CIP 108128 / LMG 27833 / NCIMB 13906 / BL2)</name>
    <dbReference type="NCBI Taxonomy" id="395965"/>
    <lineage>
        <taxon>Bacteria</taxon>
        <taxon>Pseudomonadati</taxon>
        <taxon>Pseudomonadota</taxon>
        <taxon>Alphaproteobacteria</taxon>
        <taxon>Hyphomicrobiales</taxon>
        <taxon>Beijerinckiaceae</taxon>
        <taxon>Methylocella</taxon>
    </lineage>
</organism>
<protein>
    <recommendedName>
        <fullName evidence="1">Ubiquinone biosynthesis O-methyltransferase</fullName>
    </recommendedName>
    <alternativeName>
        <fullName evidence="1">2-polyprenyl-6-hydroxyphenol methylase</fullName>
        <ecNumber evidence="1">2.1.1.222</ecNumber>
    </alternativeName>
    <alternativeName>
        <fullName evidence="1">3-demethylubiquinone 3-O-methyltransferase</fullName>
        <ecNumber evidence="1">2.1.1.64</ecNumber>
    </alternativeName>
</protein>
<name>UBIG_METSB</name>
<accession>B8EI29</accession>
<gene>
    <name evidence="1" type="primary">ubiG</name>
    <name type="ordered locus">Msil_1561</name>
</gene>
<proteinExistence type="inferred from homology"/>
<dbReference type="EC" id="2.1.1.222" evidence="1"/>
<dbReference type="EC" id="2.1.1.64" evidence="1"/>
<dbReference type="EMBL" id="CP001280">
    <property type="protein sequence ID" value="ACK50511.1"/>
    <property type="molecule type" value="Genomic_DNA"/>
</dbReference>
<dbReference type="RefSeq" id="WP_012590581.1">
    <property type="nucleotide sequence ID" value="NC_011666.1"/>
</dbReference>
<dbReference type="SMR" id="B8EI29"/>
<dbReference type="STRING" id="395965.Msil_1561"/>
<dbReference type="KEGG" id="msl:Msil_1561"/>
<dbReference type="eggNOG" id="COG2227">
    <property type="taxonomic scope" value="Bacteria"/>
</dbReference>
<dbReference type="HOGENOM" id="CLU_042432_2_1_5"/>
<dbReference type="OrthoDB" id="9801538at2"/>
<dbReference type="UniPathway" id="UPA00232"/>
<dbReference type="Proteomes" id="UP000002257">
    <property type="component" value="Chromosome"/>
</dbReference>
<dbReference type="GO" id="GO:0102208">
    <property type="term" value="F:2-polyprenyl-6-hydroxyphenol methylase activity"/>
    <property type="evidence" value="ECO:0007669"/>
    <property type="project" value="UniProtKB-EC"/>
</dbReference>
<dbReference type="GO" id="GO:0061542">
    <property type="term" value="F:3-demethylubiquinol 3-O-methyltransferase activity"/>
    <property type="evidence" value="ECO:0007669"/>
    <property type="project" value="UniProtKB-UniRule"/>
</dbReference>
<dbReference type="GO" id="GO:0010420">
    <property type="term" value="F:polyprenyldihydroxybenzoate methyltransferase activity"/>
    <property type="evidence" value="ECO:0007669"/>
    <property type="project" value="InterPro"/>
</dbReference>
<dbReference type="GO" id="GO:0032259">
    <property type="term" value="P:methylation"/>
    <property type="evidence" value="ECO:0007669"/>
    <property type="project" value="UniProtKB-KW"/>
</dbReference>
<dbReference type="CDD" id="cd02440">
    <property type="entry name" value="AdoMet_MTases"/>
    <property type="match status" value="1"/>
</dbReference>
<dbReference type="Gene3D" id="3.40.50.150">
    <property type="entry name" value="Vaccinia Virus protein VP39"/>
    <property type="match status" value="1"/>
</dbReference>
<dbReference type="HAMAP" id="MF_00472">
    <property type="entry name" value="UbiG"/>
    <property type="match status" value="1"/>
</dbReference>
<dbReference type="InterPro" id="IPR029063">
    <property type="entry name" value="SAM-dependent_MTases_sf"/>
</dbReference>
<dbReference type="InterPro" id="IPR010233">
    <property type="entry name" value="UbiG_MeTrfase"/>
</dbReference>
<dbReference type="NCBIfam" id="TIGR01983">
    <property type="entry name" value="UbiG"/>
    <property type="match status" value="1"/>
</dbReference>
<dbReference type="PANTHER" id="PTHR43464">
    <property type="entry name" value="METHYLTRANSFERASE"/>
    <property type="match status" value="1"/>
</dbReference>
<dbReference type="PANTHER" id="PTHR43464:SF19">
    <property type="entry name" value="UBIQUINONE BIOSYNTHESIS O-METHYLTRANSFERASE, MITOCHONDRIAL"/>
    <property type="match status" value="1"/>
</dbReference>
<dbReference type="Pfam" id="PF13489">
    <property type="entry name" value="Methyltransf_23"/>
    <property type="match status" value="1"/>
</dbReference>
<dbReference type="SUPFAM" id="SSF53335">
    <property type="entry name" value="S-adenosyl-L-methionine-dependent methyltransferases"/>
    <property type="match status" value="1"/>
</dbReference>
<comment type="function">
    <text evidence="1">O-methyltransferase that catalyzes the 2 O-methylation steps in the ubiquinone biosynthetic pathway.</text>
</comment>
<comment type="catalytic activity">
    <reaction evidence="1">
        <text>a 3-demethylubiquinol + S-adenosyl-L-methionine = a ubiquinol + S-adenosyl-L-homocysteine + H(+)</text>
        <dbReference type="Rhea" id="RHEA:44380"/>
        <dbReference type="Rhea" id="RHEA-COMP:9566"/>
        <dbReference type="Rhea" id="RHEA-COMP:10914"/>
        <dbReference type="ChEBI" id="CHEBI:15378"/>
        <dbReference type="ChEBI" id="CHEBI:17976"/>
        <dbReference type="ChEBI" id="CHEBI:57856"/>
        <dbReference type="ChEBI" id="CHEBI:59789"/>
        <dbReference type="ChEBI" id="CHEBI:84422"/>
        <dbReference type="EC" id="2.1.1.64"/>
    </reaction>
</comment>
<comment type="catalytic activity">
    <reaction evidence="1">
        <text>a 3-(all-trans-polyprenyl)benzene-1,2-diol + S-adenosyl-L-methionine = a 2-methoxy-6-(all-trans-polyprenyl)phenol + S-adenosyl-L-homocysteine + H(+)</text>
        <dbReference type="Rhea" id="RHEA:31411"/>
        <dbReference type="Rhea" id="RHEA-COMP:9550"/>
        <dbReference type="Rhea" id="RHEA-COMP:9551"/>
        <dbReference type="ChEBI" id="CHEBI:15378"/>
        <dbReference type="ChEBI" id="CHEBI:57856"/>
        <dbReference type="ChEBI" id="CHEBI:59789"/>
        <dbReference type="ChEBI" id="CHEBI:62729"/>
        <dbReference type="ChEBI" id="CHEBI:62731"/>
        <dbReference type="EC" id="2.1.1.222"/>
    </reaction>
</comment>
<comment type="pathway">
    <text evidence="1">Cofactor biosynthesis; ubiquinone biosynthesis.</text>
</comment>
<comment type="similarity">
    <text evidence="1">Belongs to the methyltransferase superfamily. UbiG/COQ3 family.</text>
</comment>
<evidence type="ECO:0000255" key="1">
    <source>
        <dbReference type="HAMAP-Rule" id="MF_00472"/>
    </source>
</evidence>
<feature type="chain" id="PRO_1000135508" description="Ubiquinone biosynthesis O-methyltransferase">
    <location>
        <begin position="1"/>
        <end position="256"/>
    </location>
</feature>
<feature type="binding site" evidence="1">
    <location>
        <position position="44"/>
    </location>
    <ligand>
        <name>S-adenosyl-L-methionine</name>
        <dbReference type="ChEBI" id="CHEBI:59789"/>
    </ligand>
</feature>
<feature type="binding site" evidence="1">
    <location>
        <position position="80"/>
    </location>
    <ligand>
        <name>S-adenosyl-L-methionine</name>
        <dbReference type="ChEBI" id="CHEBI:59789"/>
    </ligand>
</feature>
<feature type="binding site" evidence="1">
    <location>
        <position position="101"/>
    </location>
    <ligand>
        <name>S-adenosyl-L-methionine</name>
        <dbReference type="ChEBI" id="CHEBI:59789"/>
    </ligand>
</feature>
<feature type="binding site" evidence="1">
    <location>
        <position position="144"/>
    </location>
    <ligand>
        <name>S-adenosyl-L-methionine</name>
        <dbReference type="ChEBI" id="CHEBI:59789"/>
    </ligand>
</feature>
<reference key="1">
    <citation type="journal article" date="2010" name="J. Bacteriol.">
        <title>Complete genome sequence of the aerobic facultative methanotroph Methylocella silvestris BL2.</title>
        <authorList>
            <person name="Chen Y."/>
            <person name="Crombie A."/>
            <person name="Rahman M.T."/>
            <person name="Dedysh S.N."/>
            <person name="Liesack W."/>
            <person name="Stott M.B."/>
            <person name="Alam M."/>
            <person name="Theisen A.R."/>
            <person name="Murrell J.C."/>
            <person name="Dunfield P.F."/>
        </authorList>
    </citation>
    <scope>NUCLEOTIDE SEQUENCE [LARGE SCALE GENOMIC DNA]</scope>
    <source>
        <strain>DSM 15510 / CIP 108128 / LMG 27833 / NCIMB 13906 / BL2</strain>
    </source>
</reference>